<protein>
    <recommendedName>
        <fullName evidence="2">Flap endonuclease 1</fullName>
        <shortName evidence="2">FEN-1</shortName>
        <ecNumber evidence="2">3.1.-.-</ecNumber>
    </recommendedName>
    <alternativeName>
        <fullName evidence="2">Flap structure-specific endonuclease 1</fullName>
    </alternativeName>
</protein>
<proteinExistence type="inferred from homology"/>
<organism>
    <name type="scientific">Methanoculleus marisnigri (strain ATCC 35101 / DSM 1498 / JR1)</name>
    <dbReference type="NCBI Taxonomy" id="368407"/>
    <lineage>
        <taxon>Archaea</taxon>
        <taxon>Methanobacteriati</taxon>
        <taxon>Methanobacteriota</taxon>
        <taxon>Stenosarchaea group</taxon>
        <taxon>Methanomicrobia</taxon>
        <taxon>Methanomicrobiales</taxon>
        <taxon>Methanomicrobiaceae</taxon>
        <taxon>Methanoculleus</taxon>
    </lineage>
</organism>
<gene>
    <name evidence="2" type="primary">fen</name>
    <name type="ordered locus">Memar_1926</name>
</gene>
<sequence>MGVAIRDILADCKETLTWDDLSGIAALDAHNALYQFLSIIRQPDGTPLMNGAGRITSHLSGILFRTVNFLEKGIRPVFVFDGKPPEFKQETINERREHRARADEAWKTALREGDMEEAYKQASASARIDSHTIASSRELLDLLGIPWVQAPSEGEAQAAYMARQGKVTYAVSQDYDSLLFGSPVLVRNLTVSGRRKTRGRTITVNPERIVLSSFLDRLGVTREQLVKIGILVGTDFNPGIRGVGGKTALKIVRNGEFESVIAEKQPDFNPAPIRDFFLNPPVTDDYTLEWRTPDVEGVVEMLCGRYDFSEERVRSALAKVSVKATQKTLDAWF</sequence>
<keyword id="KW-0227">DNA damage</keyword>
<keyword id="KW-0234">DNA repair</keyword>
<keyword id="KW-0235">DNA replication</keyword>
<keyword id="KW-0255">Endonuclease</keyword>
<keyword id="KW-0269">Exonuclease</keyword>
<keyword id="KW-0378">Hydrolase</keyword>
<keyword id="KW-0460">Magnesium</keyword>
<keyword id="KW-0479">Metal-binding</keyword>
<keyword id="KW-0540">Nuclease</keyword>
<comment type="function">
    <text evidence="1">Structure-specific nuclease with 5'-flap endonuclease and 5'-3' exonuclease activities involved in DNA replication and repair. During DNA replication, cleaves the 5'-overhanging flap structure that is generated by displacement synthesis when DNA polymerase encounters the 5'-end of a downstream Okazaki fragment. Binds the unpaired 3'-DNA end and kinks the DNA to facilitate 5' cleavage specificity. Cleaves one nucleotide into the double-stranded DNA from the junction in flap DNA, leaving a nick for ligation. Also involved in the base excision repair (BER) pathway. Acts as a genome stabilization factor that prevents flaps from equilibrating into structures that lead to duplications and deletions. Also possesses 5'-3' exonuclease activity on nicked or gapped double-stranded DNA (By similarity).</text>
</comment>
<comment type="cofactor">
    <cofactor evidence="2">
        <name>Mg(2+)</name>
        <dbReference type="ChEBI" id="CHEBI:18420"/>
    </cofactor>
    <text evidence="2">Binds 2 magnesium ions per subunit. They probably participate in the reaction catalyzed by the enzyme. May bind an additional third magnesium ion after substrate binding.</text>
</comment>
<comment type="subunit">
    <text evidence="2">Interacts with PCNA. PCNA stimulates the nuclease activity without altering cleavage specificity.</text>
</comment>
<comment type="similarity">
    <text evidence="2">Belongs to the XPG/RAD2 endonuclease family. FEN1 subfamily.</text>
</comment>
<name>FEN_METMJ</name>
<accession>A3CWV2</accession>
<evidence type="ECO:0000250" key="1"/>
<evidence type="ECO:0000255" key="2">
    <source>
        <dbReference type="HAMAP-Rule" id="MF_00614"/>
    </source>
</evidence>
<feature type="chain" id="PRO_1000061326" description="Flap endonuclease 1">
    <location>
        <begin position="1"/>
        <end position="333"/>
    </location>
</feature>
<feature type="region of interest" description="N-domain">
    <location>
        <begin position="1"/>
        <end position="99"/>
    </location>
</feature>
<feature type="region of interest" description="I-domain">
    <location>
        <begin position="117"/>
        <end position="255"/>
    </location>
</feature>
<feature type="region of interest" description="Interaction with PCNA" evidence="2">
    <location>
        <begin position="325"/>
        <end position="333"/>
    </location>
</feature>
<feature type="binding site" evidence="2">
    <location>
        <position position="28"/>
    </location>
    <ligand>
        <name>Mg(2+)</name>
        <dbReference type="ChEBI" id="CHEBI:18420"/>
        <label>1</label>
    </ligand>
</feature>
<feature type="binding site" evidence="2">
    <location>
        <position position="81"/>
    </location>
    <ligand>
        <name>Mg(2+)</name>
        <dbReference type="ChEBI" id="CHEBI:18420"/>
        <label>1</label>
    </ligand>
</feature>
<feature type="binding site" evidence="2">
    <location>
        <position position="153"/>
    </location>
    <ligand>
        <name>Mg(2+)</name>
        <dbReference type="ChEBI" id="CHEBI:18420"/>
        <label>1</label>
    </ligand>
</feature>
<feature type="binding site" evidence="2">
    <location>
        <position position="155"/>
    </location>
    <ligand>
        <name>Mg(2+)</name>
        <dbReference type="ChEBI" id="CHEBI:18420"/>
        <label>1</label>
    </ligand>
</feature>
<feature type="binding site" evidence="2">
    <location>
        <position position="174"/>
    </location>
    <ligand>
        <name>Mg(2+)</name>
        <dbReference type="ChEBI" id="CHEBI:18420"/>
        <label>2</label>
    </ligand>
</feature>
<feature type="binding site" evidence="2">
    <location>
        <position position="176"/>
    </location>
    <ligand>
        <name>Mg(2+)</name>
        <dbReference type="ChEBI" id="CHEBI:18420"/>
        <label>2</label>
    </ligand>
</feature>
<feature type="binding site" evidence="2">
    <location>
        <position position="235"/>
    </location>
    <ligand>
        <name>Mg(2+)</name>
        <dbReference type="ChEBI" id="CHEBI:18420"/>
        <label>2</label>
    </ligand>
</feature>
<dbReference type="EC" id="3.1.-.-" evidence="2"/>
<dbReference type="EMBL" id="CP000562">
    <property type="protein sequence ID" value="ABN57852.1"/>
    <property type="molecule type" value="Genomic_DNA"/>
</dbReference>
<dbReference type="RefSeq" id="WP_011844761.1">
    <property type="nucleotide sequence ID" value="NC_009051.1"/>
</dbReference>
<dbReference type="SMR" id="A3CWV2"/>
<dbReference type="STRING" id="368407.Memar_1926"/>
<dbReference type="GeneID" id="4846283"/>
<dbReference type="GeneID" id="76730003"/>
<dbReference type="KEGG" id="mem:Memar_1926"/>
<dbReference type="eggNOG" id="arCOG04050">
    <property type="taxonomic scope" value="Archaea"/>
</dbReference>
<dbReference type="HOGENOM" id="CLU_032444_0_0_2"/>
<dbReference type="OrthoDB" id="9593at2157"/>
<dbReference type="Proteomes" id="UP000002146">
    <property type="component" value="Chromosome"/>
</dbReference>
<dbReference type="GO" id="GO:0008409">
    <property type="term" value="F:5'-3' exonuclease activity"/>
    <property type="evidence" value="ECO:0007669"/>
    <property type="project" value="UniProtKB-UniRule"/>
</dbReference>
<dbReference type="GO" id="GO:0017108">
    <property type="term" value="F:5'-flap endonuclease activity"/>
    <property type="evidence" value="ECO:0007669"/>
    <property type="project" value="UniProtKB-UniRule"/>
</dbReference>
<dbReference type="GO" id="GO:0003677">
    <property type="term" value="F:DNA binding"/>
    <property type="evidence" value="ECO:0007669"/>
    <property type="project" value="UniProtKB-UniRule"/>
</dbReference>
<dbReference type="GO" id="GO:0000287">
    <property type="term" value="F:magnesium ion binding"/>
    <property type="evidence" value="ECO:0007669"/>
    <property type="project" value="UniProtKB-UniRule"/>
</dbReference>
<dbReference type="GO" id="GO:0006281">
    <property type="term" value="P:DNA repair"/>
    <property type="evidence" value="ECO:0007669"/>
    <property type="project" value="UniProtKB-UniRule"/>
</dbReference>
<dbReference type="GO" id="GO:0043137">
    <property type="term" value="P:DNA replication, removal of RNA primer"/>
    <property type="evidence" value="ECO:0007669"/>
    <property type="project" value="UniProtKB-UniRule"/>
</dbReference>
<dbReference type="CDD" id="cd09903">
    <property type="entry name" value="H3TH_FEN1-Arc"/>
    <property type="match status" value="1"/>
</dbReference>
<dbReference type="CDD" id="cd09867">
    <property type="entry name" value="PIN_FEN1"/>
    <property type="match status" value="1"/>
</dbReference>
<dbReference type="FunFam" id="3.40.50.1010:FF:000016">
    <property type="entry name" value="Flap endonuclease 1"/>
    <property type="match status" value="1"/>
</dbReference>
<dbReference type="Gene3D" id="1.10.150.20">
    <property type="entry name" value="5' to 3' exonuclease, C-terminal subdomain"/>
    <property type="match status" value="1"/>
</dbReference>
<dbReference type="Gene3D" id="3.40.50.1010">
    <property type="entry name" value="5'-nuclease"/>
    <property type="match status" value="1"/>
</dbReference>
<dbReference type="HAMAP" id="MF_00614">
    <property type="entry name" value="Fen"/>
    <property type="match status" value="1"/>
</dbReference>
<dbReference type="InterPro" id="IPR036279">
    <property type="entry name" value="5-3_exonuclease_C_sf"/>
</dbReference>
<dbReference type="InterPro" id="IPR023426">
    <property type="entry name" value="Flap_endonuc"/>
</dbReference>
<dbReference type="InterPro" id="IPR019973">
    <property type="entry name" value="Flap_endonuc_arc"/>
</dbReference>
<dbReference type="InterPro" id="IPR008918">
    <property type="entry name" value="HhH2"/>
</dbReference>
<dbReference type="InterPro" id="IPR029060">
    <property type="entry name" value="PIN-like_dom_sf"/>
</dbReference>
<dbReference type="InterPro" id="IPR006086">
    <property type="entry name" value="XPG-I_dom"/>
</dbReference>
<dbReference type="InterPro" id="IPR006084">
    <property type="entry name" value="XPG/Rad2"/>
</dbReference>
<dbReference type="InterPro" id="IPR019974">
    <property type="entry name" value="XPG_CS"/>
</dbReference>
<dbReference type="InterPro" id="IPR006085">
    <property type="entry name" value="XPG_DNA_repair_N"/>
</dbReference>
<dbReference type="NCBIfam" id="TIGR03674">
    <property type="entry name" value="fen_arch"/>
    <property type="match status" value="1"/>
</dbReference>
<dbReference type="PANTHER" id="PTHR11081:SF9">
    <property type="entry name" value="FLAP ENDONUCLEASE 1"/>
    <property type="match status" value="1"/>
</dbReference>
<dbReference type="PANTHER" id="PTHR11081">
    <property type="entry name" value="FLAP ENDONUCLEASE FAMILY MEMBER"/>
    <property type="match status" value="1"/>
</dbReference>
<dbReference type="Pfam" id="PF00867">
    <property type="entry name" value="XPG_I"/>
    <property type="match status" value="1"/>
</dbReference>
<dbReference type="Pfam" id="PF00752">
    <property type="entry name" value="XPG_N"/>
    <property type="match status" value="1"/>
</dbReference>
<dbReference type="PRINTS" id="PR00853">
    <property type="entry name" value="XPGRADSUPER"/>
</dbReference>
<dbReference type="SMART" id="SM00279">
    <property type="entry name" value="HhH2"/>
    <property type="match status" value="1"/>
</dbReference>
<dbReference type="SMART" id="SM00484">
    <property type="entry name" value="XPGI"/>
    <property type="match status" value="1"/>
</dbReference>
<dbReference type="SMART" id="SM00485">
    <property type="entry name" value="XPGN"/>
    <property type="match status" value="1"/>
</dbReference>
<dbReference type="SUPFAM" id="SSF47807">
    <property type="entry name" value="5' to 3' exonuclease, C-terminal subdomain"/>
    <property type="match status" value="1"/>
</dbReference>
<dbReference type="SUPFAM" id="SSF88723">
    <property type="entry name" value="PIN domain-like"/>
    <property type="match status" value="1"/>
</dbReference>
<dbReference type="PROSITE" id="PS00841">
    <property type="entry name" value="XPG_1"/>
    <property type="match status" value="1"/>
</dbReference>
<reference key="1">
    <citation type="journal article" date="2009" name="Stand. Genomic Sci.">
        <title>Complete genome sequence of Methanoculleus marisnigri Romesser et al. 1981 type strain JR1.</title>
        <authorList>
            <person name="Anderson I.J."/>
            <person name="Sieprawska-Lupa M."/>
            <person name="Lapidus A."/>
            <person name="Nolan M."/>
            <person name="Copeland A."/>
            <person name="Glavina Del Rio T."/>
            <person name="Tice H."/>
            <person name="Dalin E."/>
            <person name="Barry K."/>
            <person name="Saunders E."/>
            <person name="Han C."/>
            <person name="Brettin T."/>
            <person name="Detter J.C."/>
            <person name="Bruce D."/>
            <person name="Mikhailova N."/>
            <person name="Pitluck S."/>
            <person name="Hauser L."/>
            <person name="Land M."/>
            <person name="Lucas S."/>
            <person name="Richardson P."/>
            <person name="Whitman W.B."/>
            <person name="Kyrpides N.C."/>
        </authorList>
    </citation>
    <scope>NUCLEOTIDE SEQUENCE [LARGE SCALE GENOMIC DNA]</scope>
    <source>
        <strain>ATCC 35101 / DSM 1498 / JR1</strain>
    </source>
</reference>